<gene>
    <name evidence="1" type="primary">ndoB</name>
    <name type="synonym">pahA3</name>
</gene>
<feature type="chain" id="PRO_0000085052" description="Naphthalene 1,2-dioxygenase system, large oxygenase component">
    <location>
        <begin position="1"/>
        <end position="449"/>
    </location>
</feature>
<feature type="domain" description="Rieske" evidence="2">
    <location>
        <begin position="39"/>
        <end position="137"/>
    </location>
</feature>
<feature type="binding site" evidence="1 2">
    <location>
        <position position="81"/>
    </location>
    <ligand>
        <name>[2Fe-2S] cluster</name>
        <dbReference type="ChEBI" id="CHEBI:190135"/>
    </ligand>
</feature>
<feature type="binding site" evidence="1 2">
    <location>
        <position position="83"/>
    </location>
    <ligand>
        <name>[2Fe-2S] cluster</name>
        <dbReference type="ChEBI" id="CHEBI:190135"/>
    </ligand>
</feature>
<feature type="binding site" evidence="1 2">
    <location>
        <position position="101"/>
    </location>
    <ligand>
        <name>[2Fe-2S] cluster</name>
        <dbReference type="ChEBI" id="CHEBI:190135"/>
    </ligand>
</feature>
<feature type="binding site" evidence="1 2">
    <location>
        <position position="104"/>
    </location>
    <ligand>
        <name>[2Fe-2S] cluster</name>
        <dbReference type="ChEBI" id="CHEBI:190135"/>
    </ligand>
</feature>
<feature type="binding site" evidence="1">
    <location>
        <position position="208"/>
    </location>
    <ligand>
        <name>Fe cation</name>
        <dbReference type="ChEBI" id="CHEBI:24875"/>
    </ligand>
</feature>
<feature type="binding site" evidence="1">
    <location>
        <position position="213"/>
    </location>
    <ligand>
        <name>Fe cation</name>
        <dbReference type="ChEBI" id="CHEBI:24875"/>
    </ligand>
</feature>
<feature type="binding site" evidence="1">
    <location>
        <position position="362"/>
    </location>
    <ligand>
        <name>Fe cation</name>
        <dbReference type="ChEBI" id="CHEBI:24875"/>
    </ligand>
</feature>
<proteinExistence type="inferred from homology"/>
<sequence>MNYKNKNLVSESGLTQKHLIHGDEELFQRELETIFARNWLFLTHDSLIPSPGDYVTAKMGVDEVIVSRQNDGSIRAFLNVCRHRGKTLVHAEAGNAKGFVCSYHGWGFGANGELQSVPFEKELYGEALDKKCMGLKEVARVESFHGFIYGCFDEEAPSLKDYMGDAGWYLEPMFKHSGGLELIGPPGKVIIKANWKAPAENFTGDAYHVGWTHASSLRSGQSVFSSLAGNAALPPEGAGLQMTSKYGSGMGVLWDGYSGVHSADLVPELMAFGGAKQERLNKEIGEVRARIYRSHLNCTVFPNNSFLTCSGVFKVWHPIDANTTEVWTYAMVEKDMPEDLKRRLVDAVQRTFGPAGFWESDDNDNMETVSQNAKKYQSRDGDLVSNLGFGGDVYGDEVYPGIVGKSAIGETSYRGFYRAYGAHISSSSWAEFEDVSKNWHTELAKTTDR</sequence>
<organism>
    <name type="scientific">Pseudomonas aeruginosa</name>
    <dbReference type="NCBI Taxonomy" id="287"/>
    <lineage>
        <taxon>Bacteria</taxon>
        <taxon>Pseudomonadati</taxon>
        <taxon>Pseudomonadota</taxon>
        <taxon>Gammaproteobacteria</taxon>
        <taxon>Pseudomonadales</taxon>
        <taxon>Pseudomonadaceae</taxon>
        <taxon>Pseudomonas</taxon>
    </lineage>
</organism>
<name>NDOB_PSEAI</name>
<reference key="1">
    <citation type="submission" date="1996-04" db="EMBL/GenBank/DDBJ databases">
        <title>The molecular analysis of an NAH7-type gene cluster, pah, located on the chromosome of Pseudomonas aeruginosa PaK1.</title>
        <authorList>
            <person name="Takizawa N."/>
            <person name="Iida T."/>
            <person name="Yamauchi K."/>
            <person name="Satoh S."/>
            <person name="Wang Y."/>
            <person name="Fukuda M."/>
            <person name="Kiyohara H."/>
        </authorList>
    </citation>
    <scope>NUCLEOTIDE SEQUENCE [GENOMIC DNA]</scope>
    <source>
        <strain>PaK1</strain>
    </source>
</reference>
<protein>
    <recommendedName>
        <fullName evidence="1">Naphthalene 1,2-dioxygenase system, large oxygenase component</fullName>
        <ecNumber evidence="1">1.14.12.12</ecNumber>
    </recommendedName>
    <alternativeName>
        <fullName evidence="1">ISP NAP</fullName>
    </alternativeName>
    <alternativeName>
        <fullName evidence="1">Naphthalene 1,2-dioxygenase ISP alpha</fullName>
    </alternativeName>
    <alternativeName>
        <fullName evidence="1">Naphthalene 1,2-dioxygenase subunit alpha</fullName>
        <shortName evidence="1">ND subunit alpha</shortName>
        <shortName evidence="1">NDO subunit alpha</shortName>
    </alternativeName>
</protein>
<accession>Q51494</accession>
<dbReference type="EC" id="1.14.12.12" evidence="1"/>
<dbReference type="EMBL" id="D84146">
    <property type="protein sequence ID" value="BAA12240.1"/>
    <property type="molecule type" value="Genomic_DNA"/>
</dbReference>
<dbReference type="SMR" id="Q51494"/>
<dbReference type="UniPathway" id="UPA00082"/>
<dbReference type="GO" id="GO:0051537">
    <property type="term" value="F:2 iron, 2 sulfur cluster binding"/>
    <property type="evidence" value="ECO:0000250"/>
    <property type="project" value="UniProtKB"/>
</dbReference>
<dbReference type="GO" id="GO:0005506">
    <property type="term" value="F:iron ion binding"/>
    <property type="evidence" value="ECO:0000250"/>
    <property type="project" value="UniProtKB"/>
</dbReference>
<dbReference type="GO" id="GO:0018625">
    <property type="term" value="F:naphthalene 1,2-dioxygenase activity"/>
    <property type="evidence" value="ECO:0000250"/>
    <property type="project" value="UniProtKB"/>
</dbReference>
<dbReference type="GO" id="GO:0009056">
    <property type="term" value="P:catabolic process"/>
    <property type="evidence" value="ECO:0007669"/>
    <property type="project" value="UniProtKB-KW"/>
</dbReference>
<dbReference type="CDD" id="cd08881">
    <property type="entry name" value="RHO_alpha_C_NDO-like"/>
    <property type="match status" value="1"/>
</dbReference>
<dbReference type="CDD" id="cd03469">
    <property type="entry name" value="Rieske_RO_Alpha_N"/>
    <property type="match status" value="1"/>
</dbReference>
<dbReference type="FunFam" id="2.102.10.10:FF:000004">
    <property type="entry name" value="3-phenylpropionate/cinnamic acid dioxygenase subunit alpha"/>
    <property type="match status" value="1"/>
</dbReference>
<dbReference type="FunFam" id="3.90.380.10:FF:000007">
    <property type="entry name" value="Naphthalene 1,2-dioxygenase system, large oxygenase component"/>
    <property type="match status" value="1"/>
</dbReference>
<dbReference type="Gene3D" id="3.90.380.10">
    <property type="entry name" value="Naphthalene 1,2-dioxygenase Alpha Subunit, Chain A, domain 1"/>
    <property type="match status" value="1"/>
</dbReference>
<dbReference type="Gene3D" id="2.102.10.10">
    <property type="entry name" value="Rieske [2Fe-2S] iron-sulphur domain"/>
    <property type="match status" value="1"/>
</dbReference>
<dbReference type="InterPro" id="IPR043266">
    <property type="entry name" value="RHO_NdoB-like_C"/>
</dbReference>
<dbReference type="InterPro" id="IPR017941">
    <property type="entry name" value="Rieske_2Fe-2S"/>
</dbReference>
<dbReference type="InterPro" id="IPR036922">
    <property type="entry name" value="Rieske_2Fe-2S_sf"/>
</dbReference>
<dbReference type="InterPro" id="IPR015881">
    <property type="entry name" value="Ring-hydroxy_dOase_2Fe2S_BS"/>
</dbReference>
<dbReference type="InterPro" id="IPR015879">
    <property type="entry name" value="Ring_hydroxy_dOase_asu_C_dom"/>
</dbReference>
<dbReference type="InterPro" id="IPR001663">
    <property type="entry name" value="Rng_hydr_dOase-A"/>
</dbReference>
<dbReference type="PANTHER" id="PTHR43756:SF1">
    <property type="entry name" value="3-PHENYLPROPIONATE_CINNAMIC ACID DIOXYGENASE SUBUNIT ALPHA"/>
    <property type="match status" value="1"/>
</dbReference>
<dbReference type="PANTHER" id="PTHR43756">
    <property type="entry name" value="CHOLINE MONOOXYGENASE, CHLOROPLASTIC"/>
    <property type="match status" value="1"/>
</dbReference>
<dbReference type="Pfam" id="PF00355">
    <property type="entry name" value="Rieske"/>
    <property type="match status" value="1"/>
</dbReference>
<dbReference type="Pfam" id="PF00848">
    <property type="entry name" value="Ring_hydroxyl_A"/>
    <property type="match status" value="1"/>
</dbReference>
<dbReference type="PRINTS" id="PR00090">
    <property type="entry name" value="RNGDIOXGNASE"/>
</dbReference>
<dbReference type="SUPFAM" id="SSF55961">
    <property type="entry name" value="Bet v1-like"/>
    <property type="match status" value="1"/>
</dbReference>
<dbReference type="SUPFAM" id="SSF50022">
    <property type="entry name" value="ISP domain"/>
    <property type="match status" value="1"/>
</dbReference>
<dbReference type="PROSITE" id="PS51296">
    <property type="entry name" value="RIESKE"/>
    <property type="match status" value="1"/>
</dbReference>
<dbReference type="PROSITE" id="PS00570">
    <property type="entry name" value="RING_HYDROXYL_ALPHA"/>
    <property type="match status" value="1"/>
</dbReference>
<keyword id="KW-0001">2Fe-2S</keyword>
<keyword id="KW-0058">Aromatic hydrocarbons catabolism</keyword>
<keyword id="KW-0223">Dioxygenase</keyword>
<keyword id="KW-0408">Iron</keyword>
<keyword id="KW-0411">Iron-sulfur</keyword>
<keyword id="KW-0479">Metal-binding</keyword>
<keyword id="KW-0520">NAD</keyword>
<keyword id="KW-0560">Oxidoreductase</keyword>
<evidence type="ECO:0000250" key="1">
    <source>
        <dbReference type="UniProtKB" id="P0A110"/>
    </source>
</evidence>
<evidence type="ECO:0000255" key="2">
    <source>
        <dbReference type="PROSITE-ProRule" id="PRU00628"/>
    </source>
</evidence>
<evidence type="ECO:0000305" key="3"/>
<comment type="function">
    <text evidence="1">Component of the naphthalene dioxygenase (NDO) multicomponent enzyme system which catalyzes the incorporation of both atoms of molecular oxygen into naphthalene to form cis-(1R,2S)-dihydroxy-1,2-dihydronaphthalene. The alpha subunit has a catalytic role in the holoenzyme.</text>
</comment>
<comment type="catalytic activity">
    <reaction evidence="1">
        <text>naphthalene + NADH + O2 + H(+) = (1R,2S)-1,2-dihydronaphthalene-1,2-diol + NAD(+)</text>
        <dbReference type="Rhea" id="RHEA:19173"/>
        <dbReference type="ChEBI" id="CHEBI:15378"/>
        <dbReference type="ChEBI" id="CHEBI:15379"/>
        <dbReference type="ChEBI" id="CHEBI:16482"/>
        <dbReference type="ChEBI" id="CHEBI:44343"/>
        <dbReference type="ChEBI" id="CHEBI:57540"/>
        <dbReference type="ChEBI" id="CHEBI:57945"/>
        <dbReference type="EC" id="1.14.12.12"/>
    </reaction>
</comment>
<comment type="cofactor">
    <cofactor evidence="1 2">
        <name>[2Fe-2S] cluster</name>
        <dbReference type="ChEBI" id="CHEBI:190135"/>
    </cofactor>
    <text evidence="1 2">Binds 1 [2Fe-2S] cluster per subunit.</text>
</comment>
<comment type="cofactor">
    <cofactor evidence="1">
        <name>Fe(2+)</name>
        <dbReference type="ChEBI" id="CHEBI:29033"/>
    </cofactor>
    <text evidence="1">Binds 1 Fe(2+) ion per subunit.</text>
</comment>
<comment type="pathway">
    <text evidence="1">Aromatic compound metabolism; naphthalene degradation.</text>
</comment>
<comment type="subunit">
    <text evidence="1">The naphthalene dioxygenase (NDO) multicomponent enzyme system is composed of an electron transfer component and a dioxygenase component (iron sulfur protein (ISP)). The electron transfer component is composed of a ferredoxin reductase (NdoR) and a ferredoxin (NdoA), and the dioxygenase component is formed of a heterohexamer (trimer of heterodimers) of three large alpha subunits (NdoB) and three small beta subunits (NdoC).</text>
</comment>
<comment type="similarity">
    <text evidence="3">Belongs to the bacterial ring-hydroxylating dioxygenase alpha subunit family.</text>
</comment>